<comment type="function">
    <text evidence="1">Catalyzes the attachment of threonine to tRNA(Thr) in a two-step reaction: L-threonine is first activated by ATP to form Thr-AMP and then transferred to the acceptor end of tRNA(Thr). Also edits incorrectly charged L-seryl-tRNA(Thr).</text>
</comment>
<comment type="catalytic activity">
    <reaction evidence="1">
        <text>tRNA(Thr) + L-threonine + ATP = L-threonyl-tRNA(Thr) + AMP + diphosphate + H(+)</text>
        <dbReference type="Rhea" id="RHEA:24624"/>
        <dbReference type="Rhea" id="RHEA-COMP:9670"/>
        <dbReference type="Rhea" id="RHEA-COMP:9704"/>
        <dbReference type="ChEBI" id="CHEBI:15378"/>
        <dbReference type="ChEBI" id="CHEBI:30616"/>
        <dbReference type="ChEBI" id="CHEBI:33019"/>
        <dbReference type="ChEBI" id="CHEBI:57926"/>
        <dbReference type="ChEBI" id="CHEBI:78442"/>
        <dbReference type="ChEBI" id="CHEBI:78534"/>
        <dbReference type="ChEBI" id="CHEBI:456215"/>
        <dbReference type="EC" id="6.1.1.3"/>
    </reaction>
</comment>
<comment type="cofactor">
    <cofactor evidence="1">
        <name>Zn(2+)</name>
        <dbReference type="ChEBI" id="CHEBI:29105"/>
    </cofactor>
    <text evidence="1">Binds 1 zinc ion per subunit.</text>
</comment>
<comment type="subunit">
    <text evidence="1">Homodimer.</text>
</comment>
<comment type="subcellular location">
    <subcellularLocation>
        <location evidence="1">Cytoplasm</location>
    </subcellularLocation>
</comment>
<comment type="similarity">
    <text evidence="1">Belongs to the class-II aminoacyl-tRNA synthetase family.</text>
</comment>
<evidence type="ECO:0000255" key="1">
    <source>
        <dbReference type="HAMAP-Rule" id="MF_00184"/>
    </source>
</evidence>
<evidence type="ECO:0000255" key="2">
    <source>
        <dbReference type="PROSITE-ProRule" id="PRU01228"/>
    </source>
</evidence>
<protein>
    <recommendedName>
        <fullName evidence="1">Threonine--tRNA ligase</fullName>
        <ecNumber evidence="1">6.1.1.3</ecNumber>
    </recommendedName>
    <alternativeName>
        <fullName evidence="1">Threonyl-tRNA synthetase</fullName>
        <shortName evidence="1">ThrRS</shortName>
    </alternativeName>
</protein>
<keyword id="KW-0030">Aminoacyl-tRNA synthetase</keyword>
<keyword id="KW-0067">ATP-binding</keyword>
<keyword id="KW-0963">Cytoplasm</keyword>
<keyword id="KW-0436">Ligase</keyword>
<keyword id="KW-0479">Metal-binding</keyword>
<keyword id="KW-0547">Nucleotide-binding</keyword>
<keyword id="KW-0648">Protein biosynthesis</keyword>
<keyword id="KW-1185">Reference proteome</keyword>
<keyword id="KW-0694">RNA-binding</keyword>
<keyword id="KW-0820">tRNA-binding</keyword>
<keyword id="KW-0862">Zinc</keyword>
<feature type="chain" id="PRO_1000203913" description="Threonine--tRNA ligase">
    <location>
        <begin position="1"/>
        <end position="644"/>
    </location>
</feature>
<feature type="domain" description="TGS" evidence="2">
    <location>
        <begin position="1"/>
        <end position="61"/>
    </location>
</feature>
<feature type="region of interest" description="Catalytic" evidence="1">
    <location>
        <begin position="242"/>
        <end position="535"/>
    </location>
</feature>
<feature type="binding site" evidence="1">
    <location>
        <position position="335"/>
    </location>
    <ligand>
        <name>Zn(2+)</name>
        <dbReference type="ChEBI" id="CHEBI:29105"/>
    </ligand>
</feature>
<feature type="binding site" evidence="1">
    <location>
        <position position="386"/>
    </location>
    <ligand>
        <name>Zn(2+)</name>
        <dbReference type="ChEBI" id="CHEBI:29105"/>
    </ligand>
</feature>
<feature type="binding site" evidence="1">
    <location>
        <position position="512"/>
    </location>
    <ligand>
        <name>Zn(2+)</name>
        <dbReference type="ChEBI" id="CHEBI:29105"/>
    </ligand>
</feature>
<organism>
    <name type="scientific">Nitrosococcus oceani (strain ATCC 19707 / BCRC 17464 / JCM 30415 / NCIMB 11848 / C-107)</name>
    <dbReference type="NCBI Taxonomy" id="323261"/>
    <lineage>
        <taxon>Bacteria</taxon>
        <taxon>Pseudomonadati</taxon>
        <taxon>Pseudomonadota</taxon>
        <taxon>Gammaproteobacteria</taxon>
        <taxon>Chromatiales</taxon>
        <taxon>Chromatiaceae</taxon>
        <taxon>Nitrosococcus</taxon>
    </lineage>
</organism>
<sequence length="644" mass="73763">MPVITLPDGSQRSFDHPVTVYDVAADIGPGLAKAALGGKIEGRLVDSSYPLEKDTKLTIITERDMDGLEIIRHSCAHLLAQAVKALYPEAQVTIGPVIEDGFYYDFAYPKGFTPEDLEAIEAKMRELVEQDLSVHRELKSREEAVSLFRRMGEEYKAEIIASIPSEEEISLYRQGDFVDLCRGPHVPSTARLKAFKLTKVAGAYWRGDANNEMLQRIYGTAWPDKKALKAYLHRLEEAEKRDHRRIGADLDLFSIQEEAGGGLVFWHPMGARIRRVIEDFWQERHTAAGYEMLYTPHIAHEELWQTSGHTDFYRESMYQPMEDDHQLYQLKPMNCPFHVLIYQGRLRSYRELPIRWAELGTVYRHEMSGALHGLMRVRGFTQDDAHIFCREEQIENEILGILDLTLEMLAAFGFDRYEIDLSTRPEKSVGPEAIWEQATQALRSALDKKGLDYAVDEGGGAFYGPKIDIKIEDAIGRKWQCSTVQLDFNLPERFAMEYVAEDGARHRPIMIHRAVLGSLERFFGVLIEHYEGKFPPWLAPVQVVVMSITDRQEGYARQVEEAMRNKGFRSLLDLRNEKIGFKIREHILRRIPYLLVIGDREVANQTVAVRTRYSQDLGAMSLDAFMEHLSVDVARLGHNISEED</sequence>
<proteinExistence type="inferred from homology"/>
<name>SYT_NITOC</name>
<accession>Q3JC02</accession>
<gene>
    <name evidence="1" type="primary">thrS</name>
    <name type="ordered locus">Noc_1140</name>
</gene>
<reference key="1">
    <citation type="journal article" date="2006" name="Appl. Environ. Microbiol.">
        <title>Complete genome sequence of the marine, chemolithoautotrophic, ammonia-oxidizing bacterium Nitrosococcus oceani ATCC 19707.</title>
        <authorList>
            <person name="Klotz M.G."/>
            <person name="Arp D.J."/>
            <person name="Chain P.S.G."/>
            <person name="El-Sheikh A.F."/>
            <person name="Hauser L.J."/>
            <person name="Hommes N.G."/>
            <person name="Larimer F.W."/>
            <person name="Malfatti S.A."/>
            <person name="Norton J.M."/>
            <person name="Poret-Peterson A.T."/>
            <person name="Vergez L.M."/>
            <person name="Ward B.B."/>
        </authorList>
    </citation>
    <scope>NUCLEOTIDE SEQUENCE [LARGE SCALE GENOMIC DNA]</scope>
    <source>
        <strain>ATCC 19707 / BCRC 17464 / JCM 30415 / NCIMB 11848 / C-107</strain>
    </source>
</reference>
<dbReference type="EC" id="6.1.1.3" evidence="1"/>
<dbReference type="EMBL" id="CP000127">
    <property type="protein sequence ID" value="ABA57644.1"/>
    <property type="molecule type" value="Genomic_DNA"/>
</dbReference>
<dbReference type="RefSeq" id="WP_011330571.1">
    <property type="nucleotide sequence ID" value="NC_007484.1"/>
</dbReference>
<dbReference type="SMR" id="Q3JC02"/>
<dbReference type="FunCoup" id="Q3JC02">
    <property type="interactions" value="587"/>
</dbReference>
<dbReference type="STRING" id="323261.Noc_1140"/>
<dbReference type="KEGG" id="noc:Noc_1140"/>
<dbReference type="eggNOG" id="COG0441">
    <property type="taxonomic scope" value="Bacteria"/>
</dbReference>
<dbReference type="HOGENOM" id="CLU_008554_0_1_6"/>
<dbReference type="InParanoid" id="Q3JC02"/>
<dbReference type="Proteomes" id="UP000006838">
    <property type="component" value="Chromosome"/>
</dbReference>
<dbReference type="GO" id="GO:0005737">
    <property type="term" value="C:cytoplasm"/>
    <property type="evidence" value="ECO:0007669"/>
    <property type="project" value="UniProtKB-SubCell"/>
</dbReference>
<dbReference type="GO" id="GO:0005524">
    <property type="term" value="F:ATP binding"/>
    <property type="evidence" value="ECO:0007669"/>
    <property type="project" value="UniProtKB-UniRule"/>
</dbReference>
<dbReference type="GO" id="GO:0046872">
    <property type="term" value="F:metal ion binding"/>
    <property type="evidence" value="ECO:0007669"/>
    <property type="project" value="UniProtKB-KW"/>
</dbReference>
<dbReference type="GO" id="GO:0004829">
    <property type="term" value="F:threonine-tRNA ligase activity"/>
    <property type="evidence" value="ECO:0007669"/>
    <property type="project" value="UniProtKB-UniRule"/>
</dbReference>
<dbReference type="GO" id="GO:0000049">
    <property type="term" value="F:tRNA binding"/>
    <property type="evidence" value="ECO:0007669"/>
    <property type="project" value="UniProtKB-KW"/>
</dbReference>
<dbReference type="GO" id="GO:0006435">
    <property type="term" value="P:threonyl-tRNA aminoacylation"/>
    <property type="evidence" value="ECO:0007669"/>
    <property type="project" value="UniProtKB-UniRule"/>
</dbReference>
<dbReference type="CDD" id="cd01667">
    <property type="entry name" value="TGS_ThrRS"/>
    <property type="match status" value="1"/>
</dbReference>
<dbReference type="CDD" id="cd00860">
    <property type="entry name" value="ThrRS_anticodon"/>
    <property type="match status" value="1"/>
</dbReference>
<dbReference type="CDD" id="cd00771">
    <property type="entry name" value="ThrRS_core"/>
    <property type="match status" value="1"/>
</dbReference>
<dbReference type="FunFam" id="3.10.20.30:FF:000005">
    <property type="entry name" value="Threonine--tRNA ligase"/>
    <property type="match status" value="1"/>
</dbReference>
<dbReference type="FunFam" id="3.30.54.20:FF:000002">
    <property type="entry name" value="Threonine--tRNA ligase"/>
    <property type="match status" value="1"/>
</dbReference>
<dbReference type="FunFam" id="3.30.930.10:FF:000002">
    <property type="entry name" value="Threonine--tRNA ligase"/>
    <property type="match status" value="1"/>
</dbReference>
<dbReference type="FunFam" id="3.40.50.800:FF:000001">
    <property type="entry name" value="Threonine--tRNA ligase"/>
    <property type="match status" value="1"/>
</dbReference>
<dbReference type="FunFam" id="3.30.980.10:FF:000005">
    <property type="entry name" value="Threonyl-tRNA synthetase, mitochondrial"/>
    <property type="match status" value="1"/>
</dbReference>
<dbReference type="Gene3D" id="3.10.20.30">
    <property type="match status" value="1"/>
</dbReference>
<dbReference type="Gene3D" id="3.30.54.20">
    <property type="match status" value="1"/>
</dbReference>
<dbReference type="Gene3D" id="3.40.50.800">
    <property type="entry name" value="Anticodon-binding domain"/>
    <property type="match status" value="1"/>
</dbReference>
<dbReference type="Gene3D" id="3.30.930.10">
    <property type="entry name" value="Bira Bifunctional Protein, Domain 2"/>
    <property type="match status" value="1"/>
</dbReference>
<dbReference type="Gene3D" id="3.30.980.10">
    <property type="entry name" value="Threonyl-trna Synthetase, Chain A, domain 2"/>
    <property type="match status" value="1"/>
</dbReference>
<dbReference type="HAMAP" id="MF_00184">
    <property type="entry name" value="Thr_tRNA_synth"/>
    <property type="match status" value="1"/>
</dbReference>
<dbReference type="InterPro" id="IPR002314">
    <property type="entry name" value="aa-tRNA-synt_IIb"/>
</dbReference>
<dbReference type="InterPro" id="IPR006195">
    <property type="entry name" value="aa-tRNA-synth_II"/>
</dbReference>
<dbReference type="InterPro" id="IPR045864">
    <property type="entry name" value="aa-tRNA-synth_II/BPL/LPL"/>
</dbReference>
<dbReference type="InterPro" id="IPR004154">
    <property type="entry name" value="Anticodon-bd"/>
</dbReference>
<dbReference type="InterPro" id="IPR036621">
    <property type="entry name" value="Anticodon-bd_dom_sf"/>
</dbReference>
<dbReference type="InterPro" id="IPR012675">
    <property type="entry name" value="Beta-grasp_dom_sf"/>
</dbReference>
<dbReference type="InterPro" id="IPR004095">
    <property type="entry name" value="TGS"/>
</dbReference>
<dbReference type="InterPro" id="IPR012676">
    <property type="entry name" value="TGS-like"/>
</dbReference>
<dbReference type="InterPro" id="IPR002320">
    <property type="entry name" value="Thr-tRNA-ligase_IIa"/>
</dbReference>
<dbReference type="InterPro" id="IPR018163">
    <property type="entry name" value="Thr/Ala-tRNA-synth_IIc_edit"/>
</dbReference>
<dbReference type="InterPro" id="IPR047246">
    <property type="entry name" value="ThrRS_anticodon"/>
</dbReference>
<dbReference type="InterPro" id="IPR033728">
    <property type="entry name" value="ThrRS_core"/>
</dbReference>
<dbReference type="InterPro" id="IPR012947">
    <property type="entry name" value="tRNA_SAD"/>
</dbReference>
<dbReference type="NCBIfam" id="TIGR00418">
    <property type="entry name" value="thrS"/>
    <property type="match status" value="1"/>
</dbReference>
<dbReference type="PANTHER" id="PTHR11451:SF44">
    <property type="entry name" value="THREONINE--TRNA LIGASE, CHLOROPLASTIC_MITOCHONDRIAL 2"/>
    <property type="match status" value="1"/>
</dbReference>
<dbReference type="PANTHER" id="PTHR11451">
    <property type="entry name" value="THREONINE-TRNA LIGASE"/>
    <property type="match status" value="1"/>
</dbReference>
<dbReference type="Pfam" id="PF03129">
    <property type="entry name" value="HGTP_anticodon"/>
    <property type="match status" value="1"/>
</dbReference>
<dbReference type="Pfam" id="PF02824">
    <property type="entry name" value="TGS"/>
    <property type="match status" value="1"/>
</dbReference>
<dbReference type="Pfam" id="PF00587">
    <property type="entry name" value="tRNA-synt_2b"/>
    <property type="match status" value="1"/>
</dbReference>
<dbReference type="Pfam" id="PF07973">
    <property type="entry name" value="tRNA_SAD"/>
    <property type="match status" value="1"/>
</dbReference>
<dbReference type="PRINTS" id="PR01047">
    <property type="entry name" value="TRNASYNTHTHR"/>
</dbReference>
<dbReference type="SMART" id="SM00863">
    <property type="entry name" value="tRNA_SAD"/>
    <property type="match status" value="1"/>
</dbReference>
<dbReference type="SUPFAM" id="SSF52954">
    <property type="entry name" value="Class II aaRS ABD-related"/>
    <property type="match status" value="1"/>
</dbReference>
<dbReference type="SUPFAM" id="SSF55681">
    <property type="entry name" value="Class II aaRS and biotin synthetases"/>
    <property type="match status" value="1"/>
</dbReference>
<dbReference type="SUPFAM" id="SSF81271">
    <property type="entry name" value="TGS-like"/>
    <property type="match status" value="1"/>
</dbReference>
<dbReference type="SUPFAM" id="SSF55186">
    <property type="entry name" value="ThrRS/AlaRS common domain"/>
    <property type="match status" value="1"/>
</dbReference>
<dbReference type="PROSITE" id="PS50862">
    <property type="entry name" value="AA_TRNA_LIGASE_II"/>
    <property type="match status" value="1"/>
</dbReference>
<dbReference type="PROSITE" id="PS51880">
    <property type="entry name" value="TGS"/>
    <property type="match status" value="1"/>
</dbReference>